<feature type="chain" id="PRO_0000452918" description="Cytochrome P450 monooxyhenase eriA">
    <location>
        <begin position="1"/>
        <end position="527"/>
    </location>
</feature>
<feature type="transmembrane region" description="Helical" evidence="2">
    <location>
        <begin position="17"/>
        <end position="37"/>
    </location>
</feature>
<feature type="binding site" description="axial binding residue" evidence="1">
    <location>
        <position position="453"/>
    </location>
    <ligand>
        <name>heme</name>
        <dbReference type="ChEBI" id="CHEBI:30413"/>
    </ligand>
    <ligandPart>
        <name>Fe</name>
        <dbReference type="ChEBI" id="CHEBI:18248"/>
    </ligandPart>
</feature>
<feature type="glycosylation site" description="N-linked (GlcNAc...) asparagine" evidence="3">
    <location>
        <position position="77"/>
    </location>
</feature>
<feature type="glycosylation site" description="N-linked (GlcNAc...) asparagine" evidence="3">
    <location>
        <position position="274"/>
    </location>
</feature>
<feature type="glycosylation site" description="N-linked (GlcNAc...) asparagine" evidence="3">
    <location>
        <position position="297"/>
    </location>
</feature>
<reference key="1">
    <citation type="journal article" date="2017" name="Angew. Chem. Int. Ed.">
        <title>Discovery and characterization of a new family of diterpene cyclases in bacteria and fungi.</title>
        <authorList>
            <person name="Yang Y.L."/>
            <person name="Zhang S."/>
            <person name="Ma K."/>
            <person name="Xu Y."/>
            <person name="Tao Q."/>
            <person name="Chen Y."/>
            <person name="Chen J."/>
            <person name="Guo S."/>
            <person name="Ren J."/>
            <person name="Wang W."/>
            <person name="Tao Y."/>
            <person name="Yin W.B."/>
            <person name="Liu H."/>
        </authorList>
    </citation>
    <scope>NUCLEOTIDE SEQUENCE [MRNA]</scope>
    <scope>FUNCTION</scope>
    <scope>INDUCTION</scope>
    <scope>PATHWAY</scope>
</reference>
<reference key="2">
    <citation type="journal article" date="2019" name="J. Am. Chem. Soc.">
        <title>Efficient reconstitution of basidiomycota diterpene erinacine gene cluster in ascomycota host Aspergillus oryzae based on genomic DNA sequences.</title>
        <authorList>
            <person name="Liu C."/>
            <person name="Minami A."/>
            <person name="Ozaki T."/>
            <person name="Wu J."/>
            <person name="Kawagishi H."/>
            <person name="Maruyama J.I."/>
            <person name="Oikawa H."/>
        </authorList>
    </citation>
    <scope>FUNCTION</scope>
    <scope>CATALYTIC ACTIVITY</scope>
    <scope>PATHWAY</scope>
</reference>
<accession>A0A1V0QSE7</accession>
<proteinExistence type="evidence at protein level"/>
<dbReference type="EC" id="1.-.-.-" evidence="5"/>
<dbReference type="EMBL" id="KY683776">
    <property type="protein sequence ID" value="ARE72238.1"/>
    <property type="molecule type" value="mRNA"/>
</dbReference>
<dbReference type="SMR" id="A0A1V0QSE7"/>
<dbReference type="GlyCosmos" id="A0A1V0QSE7">
    <property type="glycosylation" value="3 sites, No reported glycans"/>
</dbReference>
<dbReference type="BioCyc" id="MetaCyc:MONOMER-124259"/>
<dbReference type="GO" id="GO:0016020">
    <property type="term" value="C:membrane"/>
    <property type="evidence" value="ECO:0007669"/>
    <property type="project" value="UniProtKB-SubCell"/>
</dbReference>
<dbReference type="GO" id="GO:0020037">
    <property type="term" value="F:heme binding"/>
    <property type="evidence" value="ECO:0007669"/>
    <property type="project" value="InterPro"/>
</dbReference>
<dbReference type="GO" id="GO:0005506">
    <property type="term" value="F:iron ion binding"/>
    <property type="evidence" value="ECO:0007669"/>
    <property type="project" value="InterPro"/>
</dbReference>
<dbReference type="GO" id="GO:0004497">
    <property type="term" value="F:monooxygenase activity"/>
    <property type="evidence" value="ECO:0007669"/>
    <property type="project" value="UniProtKB-KW"/>
</dbReference>
<dbReference type="GO" id="GO:0016705">
    <property type="term" value="F:oxidoreductase activity, acting on paired donors, with incorporation or reduction of molecular oxygen"/>
    <property type="evidence" value="ECO:0007669"/>
    <property type="project" value="InterPro"/>
</dbReference>
<dbReference type="CDD" id="cd11065">
    <property type="entry name" value="CYP64-like"/>
    <property type="match status" value="1"/>
</dbReference>
<dbReference type="Gene3D" id="1.10.630.10">
    <property type="entry name" value="Cytochrome P450"/>
    <property type="match status" value="1"/>
</dbReference>
<dbReference type="InterPro" id="IPR001128">
    <property type="entry name" value="Cyt_P450"/>
</dbReference>
<dbReference type="InterPro" id="IPR017972">
    <property type="entry name" value="Cyt_P450_CS"/>
</dbReference>
<dbReference type="InterPro" id="IPR002401">
    <property type="entry name" value="Cyt_P450_E_grp-I"/>
</dbReference>
<dbReference type="InterPro" id="IPR036396">
    <property type="entry name" value="Cyt_P450_sf"/>
</dbReference>
<dbReference type="InterPro" id="IPR050364">
    <property type="entry name" value="Cytochrome_P450_fung"/>
</dbReference>
<dbReference type="PANTHER" id="PTHR46300:SF7">
    <property type="entry name" value="P450, PUTATIVE (EUROFUNG)-RELATED"/>
    <property type="match status" value="1"/>
</dbReference>
<dbReference type="PANTHER" id="PTHR46300">
    <property type="entry name" value="P450, PUTATIVE (EUROFUNG)-RELATED-RELATED"/>
    <property type="match status" value="1"/>
</dbReference>
<dbReference type="Pfam" id="PF00067">
    <property type="entry name" value="p450"/>
    <property type="match status" value="1"/>
</dbReference>
<dbReference type="PRINTS" id="PR00463">
    <property type="entry name" value="EP450I"/>
</dbReference>
<dbReference type="PRINTS" id="PR00385">
    <property type="entry name" value="P450"/>
</dbReference>
<dbReference type="SUPFAM" id="SSF48264">
    <property type="entry name" value="Cytochrome P450"/>
    <property type="match status" value="1"/>
</dbReference>
<dbReference type="PROSITE" id="PS00086">
    <property type="entry name" value="CYTOCHROME_P450"/>
    <property type="match status" value="1"/>
</dbReference>
<protein>
    <recommendedName>
        <fullName evidence="6">Cytochrome P450 monooxyhenase eriA</fullName>
        <ecNumber evidence="5">1.-.-.-</ecNumber>
    </recommendedName>
    <alternativeName>
        <fullName evidence="6">Erinacine biosynthesis cluster protein A</fullName>
    </alternativeName>
</protein>
<evidence type="ECO:0000250" key="1">
    <source>
        <dbReference type="UniProtKB" id="P04798"/>
    </source>
</evidence>
<evidence type="ECO:0000255" key="2"/>
<evidence type="ECO:0000255" key="3">
    <source>
        <dbReference type="PROSITE-ProRule" id="PRU00498"/>
    </source>
</evidence>
<evidence type="ECO:0000269" key="4">
    <source>
    </source>
</evidence>
<evidence type="ECO:0000269" key="5">
    <source>
    </source>
</evidence>
<evidence type="ECO:0000303" key="6">
    <source>
    </source>
</evidence>
<evidence type="ECO:0000305" key="7"/>
<evidence type="ECO:0000305" key="8">
    <source>
    </source>
</evidence>
<organism>
    <name type="scientific">Hericium erinaceus</name>
    <name type="common">Lion's mane mushroom</name>
    <name type="synonym">Hydnum erinaceus</name>
    <dbReference type="NCBI Taxonomy" id="91752"/>
    <lineage>
        <taxon>Eukaryota</taxon>
        <taxon>Fungi</taxon>
        <taxon>Dikarya</taxon>
        <taxon>Basidiomycota</taxon>
        <taxon>Agaricomycotina</taxon>
        <taxon>Agaricomycetes</taxon>
        <taxon>Russulales</taxon>
        <taxon>Hericiaceae</taxon>
        <taxon>Hericium</taxon>
    </lineage>
</organism>
<gene>
    <name evidence="6" type="primary">eriA</name>
</gene>
<keyword id="KW-0325">Glycoprotein</keyword>
<keyword id="KW-0349">Heme</keyword>
<keyword id="KW-0408">Iron</keyword>
<keyword id="KW-0472">Membrane</keyword>
<keyword id="KW-0479">Metal-binding</keyword>
<keyword id="KW-0503">Monooxygenase</keyword>
<keyword id="KW-0560">Oxidoreductase</keyword>
<keyword id="KW-0812">Transmembrane</keyword>
<keyword id="KW-1133">Transmembrane helix</keyword>
<comment type="function">
    <text evidence="4 5 8">Cytochrome P450 monooxygenase; part of the gene cluster that mediates the biosynthesis of erinacines, cyathane-xylosides that show unique biological activities, including leishmanicidal activity, stimulating activity for nerve growth-factor synthesis, and agonistic activity toward the kappa opioid receptor (PubMed:28371074, PubMed:31535864). Within the pathway, eriA catalyzes C-11 hydroxylation in the presence of the short chain dehydrogenase/reductase (SDR) eriH, which leads to the production of cyathatriol (PubMed:31535864). The first step of the erinacines biosynthesis pathway is catalyzed by the geranylgeranyl diphosphate (GGPP) synthase eriE via conversion of farnesyl pyrophosphate and isopentyl pyrophosphate into geranylgeranyl pyrophosphate (GGPP). GGPP is then substrate of the diterpene cyclase eriG for the production of cyatha-3,12-diene. The cytochrome P450 monooxygenase eriI then hydroxylates cyatha-3,12-diene at C-14 of the seven-membered ring to produce erinacol, which is further hydroxylated at C-15 by the cytochrome P450 monooxygenase eriC to yield cyathadiol. The cytochrome P450 monooxygenase eriA then catalyzes C-11 hydroxylation in the presence of the short chain dehydrogenase/reductase (SDR) eriH, which leads to the production of cyathatriol. The acetyltransferase eriL converts cyathatriol into 11-O-acetyl-cyathatriol. The SDR eriH catalyzes further oxidation of 11-O-acetyl-cyathatriol into 1-O-acetylcyathin A3. Finally, the glycosyl transferase eriJ tranfers xylose from UDP-xylose onto C-14 of 11-O-acetyl-cyathatriol to form eracine Q. EriJ is also able to convert 11-O-acetyl-cyathatriol to eracine Q2 by using UDP-D-glucose as cosubstrate, but at a lower rate (Probable).</text>
</comment>
<comment type="catalytic activity">
    <reaction evidence="5">
        <text>cyathadiol + reduced [NADPH--hemoprotein reductase] + O2 = cyathatriol + oxidized [NADPH--hemoprotein reductase] + H2O + H(+)</text>
        <dbReference type="Rhea" id="RHEA:75563"/>
        <dbReference type="Rhea" id="RHEA-COMP:11964"/>
        <dbReference type="Rhea" id="RHEA-COMP:11965"/>
        <dbReference type="ChEBI" id="CHEBI:15377"/>
        <dbReference type="ChEBI" id="CHEBI:15378"/>
        <dbReference type="ChEBI" id="CHEBI:15379"/>
        <dbReference type="ChEBI" id="CHEBI:57618"/>
        <dbReference type="ChEBI" id="CHEBI:58210"/>
        <dbReference type="ChEBI" id="CHEBI:194346"/>
        <dbReference type="ChEBI" id="CHEBI:194349"/>
    </reaction>
    <physiologicalReaction direction="left-to-right" evidence="5">
        <dbReference type="Rhea" id="RHEA:75564"/>
    </physiologicalReaction>
</comment>
<comment type="cofactor">
    <cofactor evidence="1">
        <name>heme</name>
        <dbReference type="ChEBI" id="CHEBI:30413"/>
    </cofactor>
</comment>
<comment type="pathway">
    <text evidence="5">Secondary metabolite biosynthesis.</text>
</comment>
<comment type="subcellular location">
    <subcellularLocation>
        <location evidence="2">Membrane</location>
        <topology evidence="2">Single-pass membrane protein</topology>
    </subcellularLocation>
</comment>
<comment type="induction">
    <text evidence="4">Expression is induced under erinacine P-producing conditions.</text>
</comment>
<comment type="similarity">
    <text evidence="7">Belongs to the cytochrome P450 family.</text>
</comment>
<name>ERIA_HERER</name>
<sequence>MDTSQLLTLWNDRASQLGVVDLSLLGVGAVIAFAWLFSGGKKARTPPGPRPLPILGNLLSIPTTHPWKIYDKWCRDNNSDLMYLRLPGGNGILVLNTMKAATDLLVKRSTIYSDRPQSIMLSDLMGMSWVFGLMQYGDAWKQHRRLFHREFEGSTAVRMHAQNAARRLLQRLLNSNVNYARDMQLTTGDMILSATYGITPKSEDDYFIKLAEGLVGALAVVAGGGFLVDLIPPMRWIPRWFPGGGFKKQADEWKGLGVTARSVPFNHVKEQLANGTAPLSIASHFLAAHQEDDESTNESKEFMQNILAEAYLGGAGATVGTLCTFTLAMALNPDVQKRAQAAIDEALHGERLPDFTDFGNIPYMDALLNEILRWHPGAPLGLFHSSNKDDVYEGYLVPKGTFISPNVWAILHDPAVYGEDVDEFRPERFLTKDGKRNDIPDSEIAFGFGRRICPGRTMGRDTLWITSASILATFDITNPVDKEGKPLDPASIEYSNSMSSRPPYFDCTFKLRSKAAEALVRNGLNEA</sequence>